<evidence type="ECO:0000255" key="1">
    <source>
        <dbReference type="HAMAP-Rule" id="MF_01401"/>
    </source>
</evidence>
<protein>
    <recommendedName>
        <fullName evidence="1">Peptide methionine sulfoxide reductase MsrA</fullName>
        <shortName evidence="1">Protein-methionine-S-oxide reductase</shortName>
        <ecNumber evidence="1">1.8.4.11</ecNumber>
    </recommendedName>
    <alternativeName>
        <fullName evidence="1">Peptide-methionine (S)-S-oxide reductase</fullName>
        <shortName evidence="1">Peptide Met(O) reductase</shortName>
    </alternativeName>
</protein>
<feature type="chain" id="PRO_0000138565" description="Peptide methionine sulfoxide reductase MsrA">
    <location>
        <begin position="1"/>
        <end position="211"/>
    </location>
</feature>
<feature type="active site" evidence="1">
    <location>
        <position position="52"/>
    </location>
</feature>
<reference key="1">
    <citation type="journal article" date="2005" name="Science">
        <title>Life at depth: Photobacterium profundum genome sequence and expression analysis.</title>
        <authorList>
            <person name="Vezzi A."/>
            <person name="Campanaro S."/>
            <person name="D'Angelo M."/>
            <person name="Simonato F."/>
            <person name="Vitulo N."/>
            <person name="Lauro F.M."/>
            <person name="Cestaro A."/>
            <person name="Malacrida G."/>
            <person name="Simionati B."/>
            <person name="Cannata N."/>
            <person name="Romualdi C."/>
            <person name="Bartlett D.H."/>
            <person name="Valle G."/>
        </authorList>
    </citation>
    <scope>NUCLEOTIDE SEQUENCE [LARGE SCALE GENOMIC DNA]</scope>
    <source>
        <strain>ATCC BAA-1253 / SS9</strain>
    </source>
</reference>
<comment type="function">
    <text evidence="1">Has an important function as a repair enzyme for proteins that have been inactivated by oxidation. Catalyzes the reversible oxidation-reduction of methionine sulfoxide in proteins to methionine.</text>
</comment>
<comment type="catalytic activity">
    <reaction evidence="1">
        <text>L-methionyl-[protein] + [thioredoxin]-disulfide + H2O = L-methionyl-(S)-S-oxide-[protein] + [thioredoxin]-dithiol</text>
        <dbReference type="Rhea" id="RHEA:14217"/>
        <dbReference type="Rhea" id="RHEA-COMP:10698"/>
        <dbReference type="Rhea" id="RHEA-COMP:10700"/>
        <dbReference type="Rhea" id="RHEA-COMP:12313"/>
        <dbReference type="Rhea" id="RHEA-COMP:12315"/>
        <dbReference type="ChEBI" id="CHEBI:15377"/>
        <dbReference type="ChEBI" id="CHEBI:16044"/>
        <dbReference type="ChEBI" id="CHEBI:29950"/>
        <dbReference type="ChEBI" id="CHEBI:44120"/>
        <dbReference type="ChEBI" id="CHEBI:50058"/>
        <dbReference type="EC" id="1.8.4.11"/>
    </reaction>
</comment>
<comment type="catalytic activity">
    <reaction evidence="1">
        <text>[thioredoxin]-disulfide + L-methionine + H2O = L-methionine (S)-S-oxide + [thioredoxin]-dithiol</text>
        <dbReference type="Rhea" id="RHEA:19993"/>
        <dbReference type="Rhea" id="RHEA-COMP:10698"/>
        <dbReference type="Rhea" id="RHEA-COMP:10700"/>
        <dbReference type="ChEBI" id="CHEBI:15377"/>
        <dbReference type="ChEBI" id="CHEBI:29950"/>
        <dbReference type="ChEBI" id="CHEBI:50058"/>
        <dbReference type="ChEBI" id="CHEBI:57844"/>
        <dbReference type="ChEBI" id="CHEBI:58772"/>
        <dbReference type="EC" id="1.8.4.11"/>
    </reaction>
</comment>
<comment type="similarity">
    <text evidence="1">Belongs to the MsrA Met sulfoxide reductase family.</text>
</comment>
<gene>
    <name evidence="1" type="primary">msrA</name>
    <name type="ordered locus">PBPRA0378</name>
</gene>
<dbReference type="EC" id="1.8.4.11" evidence="1"/>
<dbReference type="EMBL" id="CR378664">
    <property type="protein sequence ID" value="CAG18810.1"/>
    <property type="molecule type" value="Genomic_DNA"/>
</dbReference>
<dbReference type="RefSeq" id="WP_011217169.1">
    <property type="nucleotide sequence ID" value="NC_006370.1"/>
</dbReference>
<dbReference type="SMR" id="Q6LV65"/>
<dbReference type="STRING" id="298386.PBPRA0378"/>
<dbReference type="KEGG" id="ppr:PBPRA0378"/>
<dbReference type="eggNOG" id="COG0225">
    <property type="taxonomic scope" value="Bacteria"/>
</dbReference>
<dbReference type="HOGENOM" id="CLU_031040_10_3_6"/>
<dbReference type="Proteomes" id="UP000000593">
    <property type="component" value="Chromosome 1"/>
</dbReference>
<dbReference type="GO" id="GO:0005737">
    <property type="term" value="C:cytoplasm"/>
    <property type="evidence" value="ECO:0007669"/>
    <property type="project" value="TreeGrafter"/>
</dbReference>
<dbReference type="GO" id="GO:0036456">
    <property type="term" value="F:L-methionine-(S)-S-oxide reductase activity"/>
    <property type="evidence" value="ECO:0007669"/>
    <property type="project" value="TreeGrafter"/>
</dbReference>
<dbReference type="GO" id="GO:0008113">
    <property type="term" value="F:peptide-methionine (S)-S-oxide reductase activity"/>
    <property type="evidence" value="ECO:0007669"/>
    <property type="project" value="UniProtKB-UniRule"/>
</dbReference>
<dbReference type="GO" id="GO:0034599">
    <property type="term" value="P:cellular response to oxidative stress"/>
    <property type="evidence" value="ECO:0007669"/>
    <property type="project" value="TreeGrafter"/>
</dbReference>
<dbReference type="GO" id="GO:0036211">
    <property type="term" value="P:protein modification process"/>
    <property type="evidence" value="ECO:0007669"/>
    <property type="project" value="UniProtKB-UniRule"/>
</dbReference>
<dbReference type="FunFam" id="3.30.1060.10:FF:000001">
    <property type="entry name" value="Peptide methionine sulfoxide reductase MsrA"/>
    <property type="match status" value="1"/>
</dbReference>
<dbReference type="Gene3D" id="3.30.1060.10">
    <property type="entry name" value="Peptide methionine sulphoxide reductase MsrA"/>
    <property type="match status" value="1"/>
</dbReference>
<dbReference type="HAMAP" id="MF_01401">
    <property type="entry name" value="MsrA"/>
    <property type="match status" value="1"/>
</dbReference>
<dbReference type="InterPro" id="IPR002569">
    <property type="entry name" value="Met_Sox_Rdtase_MsrA_dom"/>
</dbReference>
<dbReference type="InterPro" id="IPR036509">
    <property type="entry name" value="Met_Sox_Rdtase_MsrA_sf"/>
</dbReference>
<dbReference type="InterPro" id="IPR050162">
    <property type="entry name" value="MsrA_MetSO_reductase"/>
</dbReference>
<dbReference type="NCBIfam" id="TIGR00401">
    <property type="entry name" value="msrA"/>
    <property type="match status" value="1"/>
</dbReference>
<dbReference type="PANTHER" id="PTHR42799">
    <property type="entry name" value="MITOCHONDRIAL PEPTIDE METHIONINE SULFOXIDE REDUCTASE"/>
    <property type="match status" value="1"/>
</dbReference>
<dbReference type="PANTHER" id="PTHR42799:SF2">
    <property type="entry name" value="MITOCHONDRIAL PEPTIDE METHIONINE SULFOXIDE REDUCTASE"/>
    <property type="match status" value="1"/>
</dbReference>
<dbReference type="Pfam" id="PF01625">
    <property type="entry name" value="PMSR"/>
    <property type="match status" value="1"/>
</dbReference>
<dbReference type="SUPFAM" id="SSF55068">
    <property type="entry name" value="Peptide methionine sulfoxide reductase"/>
    <property type="match status" value="1"/>
</dbReference>
<proteinExistence type="inferred from homology"/>
<accession>Q6LV65</accession>
<name>MSRA_PHOPR</name>
<keyword id="KW-0560">Oxidoreductase</keyword>
<keyword id="KW-1185">Reference proteome</keyword>
<organism>
    <name type="scientific">Photobacterium profundum (strain SS9)</name>
    <dbReference type="NCBI Taxonomy" id="298386"/>
    <lineage>
        <taxon>Bacteria</taxon>
        <taxon>Pseudomonadati</taxon>
        <taxon>Pseudomonadota</taxon>
        <taxon>Gammaproteobacteria</taxon>
        <taxon>Vibrionales</taxon>
        <taxon>Vibrionaceae</taxon>
        <taxon>Photobacterium</taxon>
    </lineage>
</organism>
<sequence>MSPNKHNLIAPETALIGRATSITPSLPHAVNGTILNDEKPSNYSEIIIGMGCFWGAERLFWNLPGIYSTAVGYSGGFTPNPTYEEVCSGKTGHSEVVRIIYDPLIISLEQILTLFWESHNPTQGMQQGNDIGTQYRSVIYTTTPNQLTYAQHSKQCYQQSLEQQQLESPITTEIEPAGTFYFAEDYHQQYLVKNPNGYCGLGGTGVCFIPL</sequence>